<proteinExistence type="evidence at protein level"/>
<feature type="chain" id="PRO_0000053836" description="Ataxin-3 homolog">
    <location>
        <begin position="1"/>
        <end position="280"/>
    </location>
</feature>
<feature type="domain" description="Josephin" evidence="2">
    <location>
        <begin position="7"/>
        <end position="187"/>
    </location>
</feature>
<feature type="domain" description="UIM" evidence="4">
    <location>
        <begin position="243"/>
        <end position="262"/>
    </location>
</feature>
<feature type="region of interest" description="Disordered" evidence="3">
    <location>
        <begin position="183"/>
        <end position="240"/>
    </location>
</feature>
<feature type="compositionally biased region" description="Polar residues" evidence="3">
    <location>
        <begin position="183"/>
        <end position="194"/>
    </location>
</feature>
<feature type="compositionally biased region" description="Polar residues" evidence="3">
    <location>
        <begin position="221"/>
        <end position="232"/>
    </location>
</feature>
<feature type="active site" description="Nucleophile" evidence="2">
    <location>
        <position position="20"/>
    </location>
</feature>
<feature type="active site" description="Proton acceptor" evidence="2">
    <location>
        <position position="126"/>
    </location>
</feature>
<feature type="active site" evidence="2">
    <location>
        <position position="141"/>
    </location>
</feature>
<name>ATX3H_ARATH</name>
<accession>Q9M391</accession>
<accession>Q53XG9</accession>
<gene>
    <name type="ordered locus">At3g54130</name>
    <name type="ORF">F24B22.90</name>
</gene>
<evidence type="ECO:0000250" key="1"/>
<evidence type="ECO:0000255" key="2">
    <source>
        <dbReference type="PROSITE-ProRule" id="PRU00331"/>
    </source>
</evidence>
<evidence type="ECO:0000256" key="3">
    <source>
        <dbReference type="SAM" id="MobiDB-lite"/>
    </source>
</evidence>
<evidence type="ECO:0000305" key="4"/>
<organism>
    <name type="scientific">Arabidopsis thaliana</name>
    <name type="common">Mouse-ear cress</name>
    <dbReference type="NCBI Taxonomy" id="3702"/>
    <lineage>
        <taxon>Eukaryota</taxon>
        <taxon>Viridiplantae</taxon>
        <taxon>Streptophyta</taxon>
        <taxon>Embryophyta</taxon>
        <taxon>Tracheophyta</taxon>
        <taxon>Spermatophyta</taxon>
        <taxon>Magnoliopsida</taxon>
        <taxon>eudicotyledons</taxon>
        <taxon>Gunneridae</taxon>
        <taxon>Pentapetalae</taxon>
        <taxon>rosids</taxon>
        <taxon>malvids</taxon>
        <taxon>Brassicales</taxon>
        <taxon>Brassicaceae</taxon>
        <taxon>Camelineae</taxon>
        <taxon>Arabidopsis</taxon>
    </lineage>
</organism>
<dbReference type="EC" id="3.4.19.12"/>
<dbReference type="EMBL" id="AL132957">
    <property type="protein sequence ID" value="CAB70987.1"/>
    <property type="molecule type" value="Genomic_DNA"/>
</dbReference>
<dbReference type="EMBL" id="CP002686">
    <property type="protein sequence ID" value="AEE79191.1"/>
    <property type="molecule type" value="Genomic_DNA"/>
</dbReference>
<dbReference type="EMBL" id="BT010762">
    <property type="protein sequence ID" value="AAR23732.1"/>
    <property type="molecule type" value="mRNA"/>
</dbReference>
<dbReference type="EMBL" id="BT010992">
    <property type="protein sequence ID" value="AAR24770.1"/>
    <property type="molecule type" value="mRNA"/>
</dbReference>
<dbReference type="PIR" id="T47572">
    <property type="entry name" value="T47572"/>
</dbReference>
<dbReference type="RefSeq" id="NP_190981.1">
    <property type="nucleotide sequence ID" value="NM_115273.4"/>
</dbReference>
<dbReference type="SMR" id="Q9M391"/>
<dbReference type="BioGRID" id="9897">
    <property type="interactions" value="5"/>
</dbReference>
<dbReference type="FunCoup" id="Q9M391">
    <property type="interactions" value="2642"/>
</dbReference>
<dbReference type="IntAct" id="Q9M391">
    <property type="interactions" value="5"/>
</dbReference>
<dbReference type="STRING" id="3702.Q9M391"/>
<dbReference type="MEROPS" id="C86.A01"/>
<dbReference type="iPTMnet" id="Q9M391"/>
<dbReference type="PaxDb" id="3702-AT3G54130.1"/>
<dbReference type="ProteomicsDB" id="241098"/>
<dbReference type="EnsemblPlants" id="AT3G54130.1">
    <property type="protein sequence ID" value="AT3G54130.1"/>
    <property type="gene ID" value="AT3G54130"/>
</dbReference>
<dbReference type="GeneID" id="824580"/>
<dbReference type="Gramene" id="AT3G54130.1">
    <property type="protein sequence ID" value="AT3G54130.1"/>
    <property type="gene ID" value="AT3G54130"/>
</dbReference>
<dbReference type="KEGG" id="ath:AT3G54130"/>
<dbReference type="Araport" id="AT3G54130"/>
<dbReference type="TAIR" id="AT3G54130"/>
<dbReference type="eggNOG" id="KOG2935">
    <property type="taxonomic scope" value="Eukaryota"/>
</dbReference>
<dbReference type="HOGENOM" id="CLU_031228_0_0_1"/>
<dbReference type="InParanoid" id="Q9M391"/>
<dbReference type="OMA" id="SHGENEM"/>
<dbReference type="OrthoDB" id="10063692at2759"/>
<dbReference type="PhylomeDB" id="Q9M391"/>
<dbReference type="PRO" id="PR:Q9M391"/>
<dbReference type="Proteomes" id="UP000006548">
    <property type="component" value="Chromosome 3"/>
</dbReference>
<dbReference type="ExpressionAtlas" id="Q9M391">
    <property type="expression patterns" value="baseline and differential"/>
</dbReference>
<dbReference type="GO" id="GO:0005634">
    <property type="term" value="C:nucleus"/>
    <property type="evidence" value="ECO:0007669"/>
    <property type="project" value="UniProtKB-SubCell"/>
</dbReference>
<dbReference type="GO" id="GO:0004843">
    <property type="term" value="F:cysteine-type deubiquitinase activity"/>
    <property type="evidence" value="ECO:0007669"/>
    <property type="project" value="UniProtKB-EC"/>
</dbReference>
<dbReference type="GO" id="GO:0016579">
    <property type="term" value="P:protein deubiquitination"/>
    <property type="evidence" value="ECO:0007669"/>
    <property type="project" value="InterPro"/>
</dbReference>
<dbReference type="GO" id="GO:0006508">
    <property type="term" value="P:proteolysis"/>
    <property type="evidence" value="ECO:0007669"/>
    <property type="project" value="UniProtKB-KW"/>
</dbReference>
<dbReference type="FunFam" id="1.10.287.10:FF:000012">
    <property type="entry name" value="Ataxin-3 homolog"/>
    <property type="match status" value="1"/>
</dbReference>
<dbReference type="FunFam" id="3.90.70.40:FF:000004">
    <property type="entry name" value="ataxin-3 homolog"/>
    <property type="match status" value="1"/>
</dbReference>
<dbReference type="Gene3D" id="3.90.70.40">
    <property type="match status" value="1"/>
</dbReference>
<dbReference type="Gene3D" id="6.10.140.100">
    <property type="match status" value="1"/>
</dbReference>
<dbReference type="Gene3D" id="1.10.287.10">
    <property type="entry name" value="S15/NS1, RNA-binding"/>
    <property type="match status" value="1"/>
</dbReference>
<dbReference type="InterPro" id="IPR033865">
    <property type="entry name" value="Ataxin-3"/>
</dbReference>
<dbReference type="InterPro" id="IPR006155">
    <property type="entry name" value="Josephin"/>
</dbReference>
<dbReference type="PANTHER" id="PTHR14159">
    <property type="entry name" value="ATAXIN-3-RELATED"/>
    <property type="match status" value="1"/>
</dbReference>
<dbReference type="PANTHER" id="PTHR14159:SF0">
    <property type="entry name" value="ATAXIN-3-RELATED"/>
    <property type="match status" value="1"/>
</dbReference>
<dbReference type="Pfam" id="PF02099">
    <property type="entry name" value="Josephin"/>
    <property type="match status" value="1"/>
</dbReference>
<dbReference type="PRINTS" id="PR01233">
    <property type="entry name" value="JOSEPHIN"/>
</dbReference>
<dbReference type="SMART" id="SM01246">
    <property type="entry name" value="Josephin"/>
    <property type="match status" value="1"/>
</dbReference>
<dbReference type="PROSITE" id="PS50957">
    <property type="entry name" value="JOSEPHIN"/>
    <property type="match status" value="1"/>
</dbReference>
<keyword id="KW-0378">Hydrolase</keyword>
<keyword id="KW-0539">Nucleus</keyword>
<keyword id="KW-0645">Protease</keyword>
<keyword id="KW-1185">Reference proteome</keyword>
<keyword id="KW-0788">Thiol protease</keyword>
<keyword id="KW-0804">Transcription</keyword>
<keyword id="KW-0805">Transcription regulation</keyword>
<keyword id="KW-0833">Ubl conjugation pathway</keyword>
<comment type="function">
    <text evidence="1">Interacts with key regulators of transcription and represses transcription. Acts as a histone-binding protein that regulates transcription. Acts as a deubiquitinating enzyme (By similarity).</text>
</comment>
<comment type="catalytic activity">
    <reaction>
        <text>Thiol-dependent hydrolysis of ester, thioester, amide, peptide and isopeptide bonds formed by the C-terminal Gly of ubiquitin (a 76-residue protein attached to proteins as an intracellular targeting signal).</text>
        <dbReference type="EC" id="3.4.19.12"/>
    </reaction>
</comment>
<comment type="interaction">
    <interactant intactId="EBI-25520805">
        <id>Q9M391</id>
    </interactant>
    <interactant intactId="EBI-25520823">
        <id>A0A178W4W9</id>
        <label>AXX17_At1g19640</label>
    </interactant>
    <organismsDiffer>false</organismsDiffer>
    <experiments>3</experiments>
</comment>
<comment type="interaction">
    <interactant intactId="EBI-25520805">
        <id>Q9M391</id>
    </interactant>
    <interactant intactId="EBI-17071660">
        <id>Q42569</id>
        <label>CYP90A1</label>
    </interactant>
    <organismsDiffer>false</organismsDiffer>
    <experiments>3</experiments>
</comment>
<comment type="interaction">
    <interactant intactId="EBI-25520805">
        <id>Q9M391</id>
    </interactant>
    <interactant intactId="EBI-16906963">
        <id>Q39085</id>
        <label>DIM</label>
    </interactant>
    <organismsDiffer>false</organismsDiffer>
    <experiments>3</experiments>
</comment>
<comment type="subcellular location">
    <subcellularLocation>
        <location evidence="1">Nucleus</location>
    </subcellularLocation>
</comment>
<sequence>MERTSNGGMLYHEVQESNLCAVHCVNTVLQGPFFSEFDLAAVAADLDGKERQVMLEGAAVGGFAPGDFLAEESHNVSLGGDFSIQVLQKALEVWDLQVIPLNCPDAEPAQIDPELESAFICHLHDHWFCIRKVNGEWYNFDSLLAAPQHLSKFYLSAFLDSLKGAGWSIFIVKGNFPQECPMSSSSEASNSFGQWLSPEDAERIRKNTSSGSSARNKRSNDNVNQQRRNQALSREEVQAFSEMEDDDLKAAIAASLLDASAAEANLGAVGTSEKETEKQK</sequence>
<protein>
    <recommendedName>
        <fullName>Ataxin-3 homolog</fullName>
        <ecNumber>3.4.19.12</ecNumber>
    </recommendedName>
    <alternativeName>
        <fullName>MJD1a-like</fullName>
    </alternativeName>
    <alternativeName>
        <fullName>Machado-Joseph disease-like protein</fullName>
    </alternativeName>
</protein>
<reference key="1">
    <citation type="journal article" date="2000" name="Nature">
        <title>Sequence and analysis of chromosome 3 of the plant Arabidopsis thaliana.</title>
        <authorList>
            <person name="Salanoubat M."/>
            <person name="Lemcke K."/>
            <person name="Rieger M."/>
            <person name="Ansorge W."/>
            <person name="Unseld M."/>
            <person name="Fartmann B."/>
            <person name="Valle G."/>
            <person name="Bloecker H."/>
            <person name="Perez-Alonso M."/>
            <person name="Obermaier B."/>
            <person name="Delseny M."/>
            <person name="Boutry M."/>
            <person name="Grivell L.A."/>
            <person name="Mache R."/>
            <person name="Puigdomenech P."/>
            <person name="De Simone V."/>
            <person name="Choisne N."/>
            <person name="Artiguenave F."/>
            <person name="Robert C."/>
            <person name="Brottier P."/>
            <person name="Wincker P."/>
            <person name="Cattolico L."/>
            <person name="Weissenbach J."/>
            <person name="Saurin W."/>
            <person name="Quetier F."/>
            <person name="Schaefer M."/>
            <person name="Mueller-Auer S."/>
            <person name="Gabel C."/>
            <person name="Fuchs M."/>
            <person name="Benes V."/>
            <person name="Wurmbach E."/>
            <person name="Drzonek H."/>
            <person name="Erfle H."/>
            <person name="Jordan N."/>
            <person name="Bangert S."/>
            <person name="Wiedelmann R."/>
            <person name="Kranz H."/>
            <person name="Voss H."/>
            <person name="Holland R."/>
            <person name="Brandt P."/>
            <person name="Nyakatura G."/>
            <person name="Vezzi A."/>
            <person name="D'Angelo M."/>
            <person name="Pallavicini A."/>
            <person name="Toppo S."/>
            <person name="Simionati B."/>
            <person name="Conrad A."/>
            <person name="Hornischer K."/>
            <person name="Kauer G."/>
            <person name="Loehnert T.-H."/>
            <person name="Nordsiek G."/>
            <person name="Reichelt J."/>
            <person name="Scharfe M."/>
            <person name="Schoen O."/>
            <person name="Bargues M."/>
            <person name="Terol J."/>
            <person name="Climent J."/>
            <person name="Navarro P."/>
            <person name="Collado C."/>
            <person name="Perez-Perez A."/>
            <person name="Ottenwaelder B."/>
            <person name="Duchemin D."/>
            <person name="Cooke R."/>
            <person name="Laudie M."/>
            <person name="Berger-Llauro C."/>
            <person name="Purnelle B."/>
            <person name="Masuy D."/>
            <person name="de Haan M."/>
            <person name="Maarse A.C."/>
            <person name="Alcaraz J.-P."/>
            <person name="Cottet A."/>
            <person name="Casacuberta E."/>
            <person name="Monfort A."/>
            <person name="Argiriou A."/>
            <person name="Flores M."/>
            <person name="Liguori R."/>
            <person name="Vitale D."/>
            <person name="Mannhaupt G."/>
            <person name="Haase D."/>
            <person name="Schoof H."/>
            <person name="Rudd S."/>
            <person name="Zaccaria P."/>
            <person name="Mewes H.-W."/>
            <person name="Mayer K.F.X."/>
            <person name="Kaul S."/>
            <person name="Town C.D."/>
            <person name="Koo H.L."/>
            <person name="Tallon L.J."/>
            <person name="Jenkins J."/>
            <person name="Rooney T."/>
            <person name="Rizzo M."/>
            <person name="Walts A."/>
            <person name="Utterback T."/>
            <person name="Fujii C.Y."/>
            <person name="Shea T.P."/>
            <person name="Creasy T.H."/>
            <person name="Haas B."/>
            <person name="Maiti R."/>
            <person name="Wu D."/>
            <person name="Peterson J."/>
            <person name="Van Aken S."/>
            <person name="Pai G."/>
            <person name="Militscher J."/>
            <person name="Sellers P."/>
            <person name="Gill J.E."/>
            <person name="Feldblyum T.V."/>
            <person name="Preuss D."/>
            <person name="Lin X."/>
            <person name="Nierman W.C."/>
            <person name="Salzberg S.L."/>
            <person name="White O."/>
            <person name="Venter J.C."/>
            <person name="Fraser C.M."/>
            <person name="Kaneko T."/>
            <person name="Nakamura Y."/>
            <person name="Sato S."/>
            <person name="Kato T."/>
            <person name="Asamizu E."/>
            <person name="Sasamoto S."/>
            <person name="Kimura T."/>
            <person name="Idesawa K."/>
            <person name="Kawashima K."/>
            <person name="Kishida Y."/>
            <person name="Kiyokawa C."/>
            <person name="Kohara M."/>
            <person name="Matsumoto M."/>
            <person name="Matsuno A."/>
            <person name="Muraki A."/>
            <person name="Nakayama S."/>
            <person name="Nakazaki N."/>
            <person name="Shinpo S."/>
            <person name="Takeuchi C."/>
            <person name="Wada T."/>
            <person name="Watanabe A."/>
            <person name="Yamada M."/>
            <person name="Yasuda M."/>
            <person name="Tabata S."/>
        </authorList>
    </citation>
    <scope>NUCLEOTIDE SEQUENCE [LARGE SCALE GENOMIC DNA]</scope>
    <source>
        <strain>cv. Columbia</strain>
    </source>
</reference>
<reference key="2">
    <citation type="journal article" date="2017" name="Plant J.">
        <title>Araport11: a complete reannotation of the Arabidopsis thaliana reference genome.</title>
        <authorList>
            <person name="Cheng C.Y."/>
            <person name="Krishnakumar V."/>
            <person name="Chan A.P."/>
            <person name="Thibaud-Nissen F."/>
            <person name="Schobel S."/>
            <person name="Town C.D."/>
        </authorList>
    </citation>
    <scope>GENOME REANNOTATION</scope>
    <source>
        <strain>cv. Columbia</strain>
    </source>
</reference>
<reference key="3">
    <citation type="submission" date="2003-12" db="EMBL/GenBank/DDBJ databases">
        <title>Arabidopsis ORF clones.</title>
        <authorList>
            <person name="Shinn P."/>
            <person name="Chen H."/>
            <person name="Cheuk R.F."/>
            <person name="Kim C.J."/>
            <person name="Ecker J.R."/>
        </authorList>
    </citation>
    <scope>NUCLEOTIDE SEQUENCE [LARGE SCALE MRNA]</scope>
    <source>
        <strain>cv. Columbia</strain>
    </source>
</reference>
<reference key="4">
    <citation type="journal article" date="2003" name="Proteins">
        <title>Structural modeling of ataxin-3 reveals distant homology to adaptins.</title>
        <authorList>
            <person name="Albrecht M."/>
            <person name="Hoffmann D."/>
            <person name="Evert B.O."/>
            <person name="Schmitt I."/>
            <person name="Wuellner U."/>
            <person name="Lengauer T."/>
        </authorList>
    </citation>
    <scope>3D-STRUCTURE MODELING</scope>
</reference>